<feature type="chain" id="PRO_0000193920" description="Phosphatidylethanolamine N-methyltransferase">
    <location>
        <begin position="1"/>
        <end position="199"/>
    </location>
</feature>
<feature type="topological domain" description="Lumenal" evidence="2 24">
    <location>
        <begin position="1"/>
        <end position="12"/>
    </location>
</feature>
<feature type="intramembrane region" description="Helical" evidence="2 24">
    <location>
        <begin position="13"/>
        <end position="33"/>
    </location>
</feature>
<feature type="topological domain" description="Lumenal" evidence="2 4 24">
    <location>
        <begin position="34"/>
        <end position="45"/>
    </location>
</feature>
<feature type="transmembrane region" description="Helical" evidence="2">
    <location>
        <begin position="46"/>
        <end position="66"/>
    </location>
</feature>
<feature type="topological domain" description="Cytoplasmic" evidence="2 24">
    <location>
        <begin position="67"/>
        <end position="93"/>
    </location>
</feature>
<feature type="transmembrane region" description="Helical" evidence="2">
    <location>
        <begin position="94"/>
        <end position="114"/>
    </location>
</feature>
<feature type="topological domain" description="Lumenal" evidence="2 4 24">
    <location>
        <begin position="115"/>
        <end position="157"/>
    </location>
</feature>
<feature type="transmembrane region" description="Helical" evidence="2">
    <location>
        <begin position="158"/>
        <end position="178"/>
    </location>
</feature>
<feature type="topological domain" description="Cytoplasmic" evidence="2 4 24">
    <location>
        <begin position="179"/>
        <end position="199"/>
    </location>
</feature>
<feature type="binding site" evidence="2 22">
    <location>
        <begin position="98"/>
        <end position="100"/>
    </location>
    <ligand>
        <name>S-adenosyl-L-methionine</name>
        <dbReference type="ChEBI" id="CHEBI:59789"/>
    </ligand>
</feature>
<feature type="binding site" evidence="2 22">
    <location>
        <begin position="180"/>
        <end position="181"/>
    </location>
    <ligand>
        <name>S-adenosyl-L-methionine</name>
        <dbReference type="ChEBI" id="CHEBI:59789"/>
    </ligand>
</feature>
<feature type="splice variant" id="VSP_037311" description="In isoform 2 and isoform 3." evidence="16 17">
    <original>M</original>
    <variation>MKRSGNPGAEVTNSSVAGPDCCGGLGNIDFRQADFCVM</variation>
    <location>
        <position position="1"/>
    </location>
</feature>
<feature type="splice variant" id="VSP_046034" description="In isoform 3." evidence="16">
    <original>MHASPTGLLLTVLVALTYIVALLYEEPFTAEIYRQKASGSHKRS</original>
    <variation>IPAPAGAVGSEARQPHGPAPDGAGGPHLHSGSPIRRALHR</variation>
    <location>
        <begin position="156"/>
        <end position="199"/>
    </location>
</feature>
<feature type="sequence variant" id="VAR_055372" description="In dbSNP:rs70959686.">
    <original>R</original>
    <variation>W</variation>
    <location>
        <position position="3"/>
    </location>
</feature>
<feature type="sequence variant" id="VAR_032771" description="In dbSNP:rs897453." evidence="6 7 11 12">
    <original>V</original>
    <variation>I</variation>
    <location>
        <position position="58"/>
    </location>
</feature>
<feature type="sequence variant" id="VAR_060083" description="In dbSNP:rs897453.">
    <original>V</original>
    <variation>L</variation>
    <location>
        <position position="58"/>
    </location>
</feature>
<feature type="sequence variant" id="VAR_016093" description="In dbSNP:rs7946." evidence="3 7 10 11 12 14">
    <original>V</original>
    <variation>M</variation>
    <location>
        <position position="175"/>
    </location>
</feature>
<feature type="sequence variant" id="VAR_055373" description="In dbSNP:rs70965427.">
    <original>G</original>
    <variation>R</variation>
    <location>
        <position position="194"/>
    </location>
</feature>
<feature type="mutagenesis site" description="Impairs binding to S-adenosyl-L-methionine." evidence="5">
    <original>G</original>
    <variation>E</variation>
    <location>
        <position position="98"/>
    </location>
</feature>
<feature type="mutagenesis site" description="Abolishes binding to S-adenosyl-L-methionine." evidence="5">
    <original>G</original>
    <variation>D</variation>
    <location>
        <position position="100"/>
    </location>
</feature>
<feature type="mutagenesis site" description="Abolishes binding to S-adenosyl-L-methionine." evidence="5">
    <original>E</original>
    <variation>D</variation>
    <location>
        <position position="180"/>
    </location>
</feature>
<feature type="mutagenesis site" description="Impairs binding to S-adenosyl-L-methionine." evidence="5">
    <original>E</original>
    <variation>D</variation>
    <location>
        <position position="181"/>
    </location>
</feature>
<feature type="sequence variant" id="VAR_082891" description="In dbSNP:rs7215880." evidence="13">
    <original>V</original>
    <variation>A</variation>
    <location sequence="Q9UBM1-2">
        <position position="11"/>
    </location>
</feature>
<feature type="sequence conflict" description="In Ref. 5; BAG63603." evidence="20" ref="5">
    <original>S</original>
    <variation>N</variation>
    <location sequence="Q9UBM1-3">
        <position position="222"/>
    </location>
</feature>
<organism>
    <name type="scientific">Homo sapiens</name>
    <name type="common">Human</name>
    <dbReference type="NCBI Taxonomy" id="9606"/>
    <lineage>
        <taxon>Eukaryota</taxon>
        <taxon>Metazoa</taxon>
        <taxon>Chordata</taxon>
        <taxon>Craniata</taxon>
        <taxon>Vertebrata</taxon>
        <taxon>Euteleostomi</taxon>
        <taxon>Mammalia</taxon>
        <taxon>Eutheria</taxon>
        <taxon>Euarchontoglires</taxon>
        <taxon>Primates</taxon>
        <taxon>Haplorrhini</taxon>
        <taxon>Catarrhini</taxon>
        <taxon>Hominidae</taxon>
        <taxon>Homo</taxon>
    </lineage>
</organism>
<dbReference type="EC" id="2.1.1.17" evidence="21 24"/>
<dbReference type="EC" id="2.1.1.71" evidence="4 9"/>
<dbReference type="EMBL" id="AF176807">
    <property type="protein sequence ID" value="AAD53292.1"/>
    <property type="molecule type" value="mRNA"/>
</dbReference>
<dbReference type="EMBL" id="AF176806">
    <property type="protein sequence ID" value="AAD53291.1"/>
    <property type="molecule type" value="mRNA"/>
</dbReference>
<dbReference type="EMBL" id="AF294468">
    <property type="protein sequence ID" value="AAK19172.1"/>
    <property type="molecule type" value="Genomic_DNA"/>
</dbReference>
<dbReference type="EMBL" id="AF294463">
    <property type="protein sequence ID" value="AAK19172.1"/>
    <property type="status" value="JOINED"/>
    <property type="molecule type" value="Genomic_DNA"/>
</dbReference>
<dbReference type="EMBL" id="AF294464">
    <property type="protein sequence ID" value="AAK19172.1"/>
    <property type="status" value="JOINED"/>
    <property type="molecule type" value="Genomic_DNA"/>
</dbReference>
<dbReference type="EMBL" id="AF294465">
    <property type="protein sequence ID" value="AAK19172.1"/>
    <property type="status" value="JOINED"/>
    <property type="molecule type" value="Genomic_DNA"/>
</dbReference>
<dbReference type="EMBL" id="AF294466">
    <property type="protein sequence ID" value="AAK19172.1"/>
    <property type="status" value="JOINED"/>
    <property type="molecule type" value="Genomic_DNA"/>
</dbReference>
<dbReference type="EMBL" id="AF294467">
    <property type="protein sequence ID" value="AAK19172.1"/>
    <property type="status" value="JOINED"/>
    <property type="molecule type" value="Genomic_DNA"/>
</dbReference>
<dbReference type="EMBL" id="AB029821">
    <property type="protein sequence ID" value="BAA82407.1"/>
    <property type="molecule type" value="mRNA"/>
</dbReference>
<dbReference type="EMBL" id="AF113126">
    <property type="protein sequence ID" value="AAF14867.1"/>
    <property type="molecule type" value="mRNA"/>
</dbReference>
<dbReference type="EMBL" id="AK302251">
    <property type="protein sequence ID" value="BAG63603.1"/>
    <property type="molecule type" value="mRNA"/>
</dbReference>
<dbReference type="EMBL" id="CR457099">
    <property type="protein sequence ID" value="CAG33380.1"/>
    <property type="molecule type" value="mRNA"/>
</dbReference>
<dbReference type="EMBL" id="EU574003">
    <property type="protein sequence ID" value="ACB21050.1"/>
    <property type="molecule type" value="Genomic_DNA"/>
</dbReference>
<dbReference type="EMBL" id="AC020558">
    <property type="status" value="NOT_ANNOTATED_CDS"/>
    <property type="molecule type" value="Genomic_DNA"/>
</dbReference>
<dbReference type="EMBL" id="CH471196">
    <property type="protein sequence ID" value="EAW55701.1"/>
    <property type="molecule type" value="Genomic_DNA"/>
</dbReference>
<dbReference type="EMBL" id="CH471196">
    <property type="protein sequence ID" value="EAW55702.1"/>
    <property type="molecule type" value="Genomic_DNA"/>
</dbReference>
<dbReference type="EMBL" id="BC000557">
    <property type="protein sequence ID" value="AAH00557.1"/>
    <property type="molecule type" value="mRNA"/>
</dbReference>
<dbReference type="EMBL" id="BC050593">
    <property type="protein sequence ID" value="AAH50593.1"/>
    <property type="molecule type" value="mRNA"/>
</dbReference>
<dbReference type="CCDS" id="CCDS11186.1">
    <molecule id="Q9UBM1-2"/>
</dbReference>
<dbReference type="CCDS" id="CCDS11187.1">
    <molecule id="Q9UBM1-1"/>
</dbReference>
<dbReference type="CCDS" id="CCDS58520.1">
    <molecule id="Q9UBM1-3"/>
</dbReference>
<dbReference type="RefSeq" id="NP_001254480.1">
    <property type="nucleotide sequence ID" value="NM_001267551.1"/>
</dbReference>
<dbReference type="RefSeq" id="NP_001254481.1">
    <molecule id="Q9UBM1-3"/>
    <property type="nucleotide sequence ID" value="NM_001267552.2"/>
</dbReference>
<dbReference type="RefSeq" id="NP_009100.2">
    <molecule id="Q9UBM1-1"/>
    <property type="nucleotide sequence ID" value="NM_007169.2"/>
</dbReference>
<dbReference type="RefSeq" id="NP_680477.1">
    <molecule id="Q9UBM1-2"/>
    <property type="nucleotide sequence ID" value="NM_148172.3"/>
</dbReference>
<dbReference type="RefSeq" id="NP_680478.1">
    <molecule id="Q9UBM1-1"/>
    <property type="nucleotide sequence ID" value="NM_148173.2"/>
</dbReference>
<dbReference type="RefSeq" id="XP_024306300.1">
    <molecule id="Q9UBM1-1"/>
    <property type="nucleotide sequence ID" value="XM_024450532.2"/>
</dbReference>
<dbReference type="BioGRID" id="115672">
    <property type="interactions" value="41"/>
</dbReference>
<dbReference type="FunCoup" id="Q9UBM1">
    <property type="interactions" value="777"/>
</dbReference>
<dbReference type="IntAct" id="Q9UBM1">
    <property type="interactions" value="36"/>
</dbReference>
<dbReference type="STRING" id="9606.ENSP00000255389"/>
<dbReference type="SwissLipids" id="SLP:000001199">
    <molecule id="Q9UBM1-1"/>
</dbReference>
<dbReference type="iPTMnet" id="Q9UBM1"/>
<dbReference type="BioMuta" id="PEMT"/>
<dbReference type="DMDM" id="148887406"/>
<dbReference type="jPOST" id="Q9UBM1"/>
<dbReference type="MassIVE" id="Q9UBM1"/>
<dbReference type="PaxDb" id="9606-ENSP00000255389"/>
<dbReference type="PeptideAtlas" id="Q9UBM1"/>
<dbReference type="ProteomicsDB" id="2457"/>
<dbReference type="ProteomicsDB" id="84006">
    <molecule id="Q9UBM1-1"/>
</dbReference>
<dbReference type="ProteomicsDB" id="84007">
    <molecule id="Q9UBM1-2"/>
</dbReference>
<dbReference type="Pumba" id="Q9UBM1"/>
<dbReference type="TopDownProteomics" id="Q9UBM1-1">
    <molecule id="Q9UBM1-1"/>
</dbReference>
<dbReference type="Antibodypedia" id="25461">
    <property type="antibodies" value="178 antibodies from 24 providers"/>
</dbReference>
<dbReference type="DNASU" id="10400"/>
<dbReference type="Ensembl" id="ENST00000255389.10">
    <molecule id="Q9UBM1-2"/>
    <property type="protein sequence ID" value="ENSP00000255389.5"/>
    <property type="gene ID" value="ENSG00000133027.18"/>
</dbReference>
<dbReference type="Ensembl" id="ENST00000395781.6">
    <molecule id="Q9UBM1-3"/>
    <property type="protein sequence ID" value="ENSP00000379127.2"/>
    <property type="gene ID" value="ENSG00000133027.18"/>
</dbReference>
<dbReference type="Ensembl" id="ENST00000395782.5">
    <molecule id="Q9UBM1-1"/>
    <property type="protein sequence ID" value="ENSP00000379128.1"/>
    <property type="gene ID" value="ENSG00000133027.18"/>
</dbReference>
<dbReference type="Ensembl" id="ENST00000395783.5">
    <molecule id="Q9UBM1-1"/>
    <property type="protein sequence ID" value="ENSP00000379129.1"/>
    <property type="gene ID" value="ENSG00000133027.18"/>
</dbReference>
<dbReference type="GeneID" id="10400"/>
<dbReference type="KEGG" id="hsa:10400"/>
<dbReference type="MANE-Select" id="ENST00000255389.10">
    <molecule id="Q9UBM1-2"/>
    <property type="protein sequence ID" value="ENSP00000255389.5"/>
    <property type="RefSeq nucleotide sequence ID" value="NM_148172.3"/>
    <property type="RefSeq protein sequence ID" value="NP_680477.1"/>
</dbReference>
<dbReference type="UCSC" id="uc002grj.3">
    <molecule id="Q9UBM1-1"/>
    <property type="organism name" value="human"/>
</dbReference>
<dbReference type="AGR" id="HGNC:8830"/>
<dbReference type="CTD" id="10400"/>
<dbReference type="DisGeNET" id="10400"/>
<dbReference type="GeneCards" id="PEMT"/>
<dbReference type="HGNC" id="HGNC:8830">
    <property type="gene designation" value="PEMT"/>
</dbReference>
<dbReference type="HPA" id="ENSG00000133027">
    <property type="expression patterns" value="Tissue enhanced (epididymis, liver)"/>
</dbReference>
<dbReference type="MalaCards" id="PEMT"/>
<dbReference type="MIM" id="602391">
    <property type="type" value="gene"/>
</dbReference>
<dbReference type="neXtProt" id="NX_Q9UBM1"/>
<dbReference type="OpenTargets" id="ENSG00000133027"/>
<dbReference type="PharmGKB" id="PA33175"/>
<dbReference type="VEuPathDB" id="HostDB:ENSG00000133027"/>
<dbReference type="eggNOG" id="KOG4142">
    <property type="taxonomic scope" value="Eukaryota"/>
</dbReference>
<dbReference type="GeneTree" id="ENSGT00390000007041"/>
<dbReference type="HOGENOM" id="CLU_086119_0_1_1"/>
<dbReference type="InParanoid" id="Q9UBM1"/>
<dbReference type="OMA" id="PTFWNIA"/>
<dbReference type="OrthoDB" id="8300106at2759"/>
<dbReference type="PAN-GO" id="Q9UBM1">
    <property type="GO annotations" value="2 GO annotations based on evolutionary models"/>
</dbReference>
<dbReference type="PhylomeDB" id="Q9UBM1"/>
<dbReference type="TreeFam" id="TF300198"/>
<dbReference type="BRENDA" id="2.1.1.17">
    <property type="organism ID" value="2681"/>
</dbReference>
<dbReference type="PathwayCommons" id="Q9UBM1"/>
<dbReference type="Reactome" id="R-HSA-1483191">
    <property type="pathway name" value="Synthesis of PC"/>
</dbReference>
<dbReference type="SignaLink" id="Q9UBM1"/>
<dbReference type="UniPathway" id="UPA00753"/>
<dbReference type="BioGRID-ORCS" id="10400">
    <property type="hits" value="9 hits in 1155 CRISPR screens"/>
</dbReference>
<dbReference type="ChiTaRS" id="PEMT">
    <property type="organism name" value="human"/>
</dbReference>
<dbReference type="GeneWiki" id="Phosphatidyl_ethanolamine_methyltransferase"/>
<dbReference type="GenomeRNAi" id="10400"/>
<dbReference type="Pharos" id="Q9UBM1">
    <property type="development level" value="Tbio"/>
</dbReference>
<dbReference type="PRO" id="PR:Q9UBM1"/>
<dbReference type="Proteomes" id="UP000005640">
    <property type="component" value="Chromosome 17"/>
</dbReference>
<dbReference type="RNAct" id="Q9UBM1">
    <property type="molecule type" value="protein"/>
</dbReference>
<dbReference type="Bgee" id="ENSG00000133027">
    <property type="expression patterns" value="Expressed in corpus epididymis and 172 other cell types or tissues"/>
</dbReference>
<dbReference type="ExpressionAtlas" id="Q9UBM1">
    <property type="expression patterns" value="baseline and differential"/>
</dbReference>
<dbReference type="GO" id="GO:0005829">
    <property type="term" value="C:cytosol"/>
    <property type="evidence" value="ECO:0000314"/>
    <property type="project" value="HPA"/>
</dbReference>
<dbReference type="GO" id="GO:0005783">
    <property type="term" value="C:endoplasmic reticulum"/>
    <property type="evidence" value="ECO:0000314"/>
    <property type="project" value="HPA"/>
</dbReference>
<dbReference type="GO" id="GO:0005789">
    <property type="term" value="C:endoplasmic reticulum membrane"/>
    <property type="evidence" value="ECO:0000304"/>
    <property type="project" value="Reactome"/>
</dbReference>
<dbReference type="GO" id="GO:0043231">
    <property type="term" value="C:intracellular membrane-bounded organelle"/>
    <property type="evidence" value="ECO:0000314"/>
    <property type="project" value="HPA"/>
</dbReference>
<dbReference type="GO" id="GO:0031966">
    <property type="term" value="C:mitochondrial membrane"/>
    <property type="evidence" value="ECO:0007669"/>
    <property type="project" value="UniProtKB-SubCell"/>
</dbReference>
<dbReference type="GO" id="GO:0005739">
    <property type="term" value="C:mitochondrion"/>
    <property type="evidence" value="ECO:0000314"/>
    <property type="project" value="HPA"/>
</dbReference>
<dbReference type="GO" id="GO:0000773">
    <property type="term" value="F:phosphatidyl-N-methylethanolamine N-methyltransferase activity"/>
    <property type="evidence" value="ECO:0007669"/>
    <property type="project" value="UniProtKB-UniRule"/>
</dbReference>
<dbReference type="GO" id="GO:0004608">
    <property type="term" value="F:phosphatidylethanolamine N-methyltransferase activity"/>
    <property type="evidence" value="ECO:0000318"/>
    <property type="project" value="GO_Central"/>
</dbReference>
<dbReference type="GO" id="GO:0001835">
    <property type="term" value="P:blastocyst hatching"/>
    <property type="evidence" value="ECO:0007669"/>
    <property type="project" value="Ensembl"/>
</dbReference>
<dbReference type="GO" id="GO:0032259">
    <property type="term" value="P:methylation"/>
    <property type="evidence" value="ECO:0007669"/>
    <property type="project" value="UniProtKB-KW"/>
</dbReference>
<dbReference type="GO" id="GO:0006656">
    <property type="term" value="P:phosphatidylcholine biosynthetic process"/>
    <property type="evidence" value="ECO:0000318"/>
    <property type="project" value="GO_Central"/>
</dbReference>
<dbReference type="GO" id="GO:0120162">
    <property type="term" value="P:positive regulation of cold-induced thermogenesis"/>
    <property type="evidence" value="ECO:0000250"/>
    <property type="project" value="YuBioLab"/>
</dbReference>
<dbReference type="GO" id="GO:0006686">
    <property type="term" value="P:sphingomyelin biosynthetic process"/>
    <property type="evidence" value="ECO:0007669"/>
    <property type="project" value="Ensembl"/>
</dbReference>
<dbReference type="FunFam" id="1.20.120.1630:FF:000005">
    <property type="entry name" value="Phosphatidylethanolamine N-methyltransferase"/>
    <property type="match status" value="1"/>
</dbReference>
<dbReference type="Gene3D" id="1.20.120.1630">
    <property type="match status" value="1"/>
</dbReference>
<dbReference type="HAMAP" id="MF_03216">
    <property type="entry name" value="PLMT"/>
    <property type="match status" value="1"/>
</dbReference>
<dbReference type="InterPro" id="IPR024960">
    <property type="entry name" value="PEMT/MFAP"/>
</dbReference>
<dbReference type="InterPro" id="IPR007318">
    <property type="entry name" value="Phopholipid_MeTrfase"/>
</dbReference>
<dbReference type="PANTHER" id="PTHR15458">
    <property type="entry name" value="PHOSPHATIDYLETHANOLAMINE N-METHYLTRANSFERASE"/>
    <property type="match status" value="1"/>
</dbReference>
<dbReference type="PANTHER" id="PTHR15458:SF5">
    <property type="entry name" value="PHOSPHATIDYLETHANOLAMINE N-METHYLTRANSFERASE"/>
    <property type="match status" value="1"/>
</dbReference>
<dbReference type="Pfam" id="PF04191">
    <property type="entry name" value="PEMT"/>
    <property type="match status" value="1"/>
</dbReference>
<dbReference type="PIRSF" id="PIRSF005444">
    <property type="entry name" value="PEMT"/>
    <property type="match status" value="1"/>
</dbReference>
<dbReference type="PROSITE" id="PS51599">
    <property type="entry name" value="SAM_PEMT_PEM2"/>
    <property type="match status" value="1"/>
</dbReference>
<keyword id="KW-0025">Alternative splicing</keyword>
<keyword id="KW-0256">Endoplasmic reticulum</keyword>
<keyword id="KW-0444">Lipid biosynthesis</keyword>
<keyword id="KW-0443">Lipid metabolism</keyword>
<keyword id="KW-0472">Membrane</keyword>
<keyword id="KW-0489">Methyltransferase</keyword>
<keyword id="KW-0496">Mitochondrion</keyword>
<keyword id="KW-0594">Phospholipid biosynthesis</keyword>
<keyword id="KW-1208">Phospholipid metabolism</keyword>
<keyword id="KW-1267">Proteomics identification</keyword>
<keyword id="KW-1185">Reference proteome</keyword>
<keyword id="KW-0949">S-adenosyl-L-methionine</keyword>
<keyword id="KW-0808">Transferase</keyword>
<keyword id="KW-0812">Transmembrane</keyword>
<keyword id="KW-1133">Transmembrane helix</keyword>
<sequence length="199" mass="22134">MTRLLGYVDPLDPSFVAAVITITFNPLYWNVVARWEHKTRKLSRAFGSPYLACYSLSVTILLLNFLRSHCFTQAMLSQPRMESLDTPAAYSLGLALLGLGVVLVLSSFFALGFAGTFLGDYFGILKEARVTVFPFNILDNPMYWGSTANYLGWAIMHASPTGLLLTVLVALTYIVALLYEEPFTAEIYRQKASGSHKRS</sequence>
<accession>Q9UBM1</accession>
<accession>A8MZ66</accession>
<accession>B4DY41</accession>
<accession>D3DXC3</accession>
<accession>Q6IAQ5</accession>
<accession>Q86VL3</accession>
<accession>Q9BW86</accession>
<accession>Q9UHY6</accession>
<accession>Q9Y6V9</accession>
<protein>
    <recommendedName>
        <fullName evidence="15 19">Phosphatidylethanolamine N-methyltransferase</fullName>
        <shortName evidence="2">PEAMT</shortName>
        <shortName evidence="15 19">PEMT</shortName>
        <ecNumber evidence="21 24">2.1.1.17</ecNumber>
        <ecNumber evidence="4 9">2.1.1.71</ecNumber>
    </recommendedName>
    <alternativeName>
        <fullName>PEMT2</fullName>
    </alternativeName>
    <alternativeName>
        <fullName evidence="2">Phospholipid methyltransferase</fullName>
        <shortName evidence="2">PLMT</shortName>
    </alternativeName>
</protein>
<comment type="function">
    <text evidence="4 8 21">Catalyzes the three sequential steps of the methylation pathway for the biosynthesis of phosphatidylcholine, a critical and essential component for membrane structure (PubMed:12431977, PubMed:15927961). Uses S-adenosylmethionine (S-adenosyl-L-methionine, SAM or AdoMet) as the methyl group donor for the methylation of phosphatidylethanolamine (1,2-diacyl-sn-glycero-3-phosphoethanolamine, PE) to phosphatidylmonomethylethanolamine (1,2-diacyl-sn-glycero-3-phospho-N-methylethanolamine, PMME), PMME to phosphatidyldimethylethanolamine (1,2-diacyl-sn-glycero-3-phospho-N,N-dimethylethanolamine, PDME), and PDME to phosphatidylcholine (1,2-diacyl-sn-glycero-3-phosphocholine, PC), producing S-adenosyl-L-homocysteine in each step (PubMed:12431977, PubMed:15927961). Responsible for approximately 30% of hepatic PC with the CDP-choline pathway accounting for the other 70% (Probable).</text>
</comment>
<comment type="function">
    <molecule>Isoform 1</molecule>
    <text evidence="9">Catalyzes the three sequential steps of the methylation of 1,2-diacyl-sn-glycero-3-phospho-N-methylethanolamine (PMME) to 1,2-diacyl-sn-glycero-3-phospho-N,N-dimethylethanolamine (PDME) more efficiently than isoform 2 (PubMed:20860552). Induces increase in PC species with longer polyunsaturated chains than isoform 2 (PubMed:20860552).</text>
</comment>
<comment type="function">
    <molecule>Isoform 2</molecule>
    <text evidence="9">Produces a higher increase in the level of PC species containing long chains with three double bonds than isoform 1.</text>
</comment>
<comment type="catalytic activity">
    <molecule>Isoform 1</molecule>
    <reaction evidence="4 8 9">
        <text>a 1,2-diacyl-sn-glycero-3-phospho-N-methylethanolamine + S-adenosyl-L-methionine = a 1,2-diacyl-sn-glycero-3-phospho-N,N-dimethylethanolamine + S-adenosyl-L-homocysteine + H(+)</text>
        <dbReference type="Rhea" id="RHEA:32735"/>
        <dbReference type="ChEBI" id="CHEBI:15378"/>
        <dbReference type="ChEBI" id="CHEBI:57856"/>
        <dbReference type="ChEBI" id="CHEBI:59789"/>
        <dbReference type="ChEBI" id="CHEBI:64572"/>
        <dbReference type="ChEBI" id="CHEBI:64573"/>
        <dbReference type="EC" id="2.1.1.71"/>
    </reaction>
    <physiologicalReaction direction="left-to-right" evidence="8 21 24">
        <dbReference type="Rhea" id="RHEA:32736"/>
    </physiologicalReaction>
</comment>
<comment type="catalytic activity">
    <molecule>Isoform 2</molecule>
    <reaction evidence="9">
        <text>a 1,2-diacyl-sn-glycero-3-phospho-N-methylethanolamine + S-adenosyl-L-methionine = a 1,2-diacyl-sn-glycero-3-phospho-N,N-dimethylethanolamine + S-adenosyl-L-homocysteine + H(+)</text>
        <dbReference type="Rhea" id="RHEA:32735"/>
        <dbReference type="ChEBI" id="CHEBI:15378"/>
        <dbReference type="ChEBI" id="CHEBI:57856"/>
        <dbReference type="ChEBI" id="CHEBI:59789"/>
        <dbReference type="ChEBI" id="CHEBI:64572"/>
        <dbReference type="ChEBI" id="CHEBI:64573"/>
        <dbReference type="EC" id="2.1.1.71"/>
    </reaction>
    <physiologicalReaction direction="left-to-right" evidence="24">
        <dbReference type="Rhea" id="RHEA:32736"/>
    </physiologicalReaction>
</comment>
<comment type="catalytic activity">
    <molecule>Isoform 1</molecule>
    <reaction evidence="21 23 24">
        <text>a 1,2-diacyl-sn-glycero-3-phospho-N,N-dimethylethanolamine + S-adenosyl-L-methionine = a 1,2-diacyl-sn-glycero-3-phosphocholine + S-adenosyl-L-homocysteine + H(+)</text>
        <dbReference type="Rhea" id="RHEA:32739"/>
        <dbReference type="ChEBI" id="CHEBI:15378"/>
        <dbReference type="ChEBI" id="CHEBI:57643"/>
        <dbReference type="ChEBI" id="CHEBI:57856"/>
        <dbReference type="ChEBI" id="CHEBI:59789"/>
        <dbReference type="ChEBI" id="CHEBI:64572"/>
        <dbReference type="EC" id="2.1.1.71"/>
    </reaction>
    <physiologicalReaction direction="left-to-right" evidence="21 23 24">
        <dbReference type="Rhea" id="RHEA:32740"/>
    </physiologicalReaction>
</comment>
<comment type="catalytic activity">
    <molecule>Isoform 2</molecule>
    <reaction evidence="24">
        <text>a 1,2-diacyl-sn-glycero-3-phospho-N,N-dimethylethanolamine + S-adenosyl-L-methionine = a 1,2-diacyl-sn-glycero-3-phosphocholine + S-adenosyl-L-homocysteine + H(+)</text>
        <dbReference type="Rhea" id="RHEA:32739"/>
        <dbReference type="ChEBI" id="CHEBI:15378"/>
        <dbReference type="ChEBI" id="CHEBI:57643"/>
        <dbReference type="ChEBI" id="CHEBI:57856"/>
        <dbReference type="ChEBI" id="CHEBI:59789"/>
        <dbReference type="ChEBI" id="CHEBI:64572"/>
        <dbReference type="EC" id="2.1.1.71"/>
    </reaction>
    <physiologicalReaction direction="left-to-right" evidence="24">
        <dbReference type="Rhea" id="RHEA:32740"/>
    </physiologicalReaction>
</comment>
<comment type="catalytic activity">
    <molecule>Isoform 1</molecule>
    <reaction evidence="21 23 24">
        <text>a 1,2-diacyl-sn-glycero-3-phosphoethanolamine + S-adenosyl-L-methionine = a 1,2-diacyl-sn-glycero-3-phospho-N-methylethanolamine + S-adenosyl-L-homocysteine + H(+)</text>
        <dbReference type="Rhea" id="RHEA:11164"/>
        <dbReference type="ChEBI" id="CHEBI:15378"/>
        <dbReference type="ChEBI" id="CHEBI:57856"/>
        <dbReference type="ChEBI" id="CHEBI:59789"/>
        <dbReference type="ChEBI" id="CHEBI:64573"/>
        <dbReference type="ChEBI" id="CHEBI:64612"/>
        <dbReference type="EC" id="2.1.1.17"/>
    </reaction>
    <physiologicalReaction direction="left-to-right" evidence="21 23 24">
        <dbReference type="Rhea" id="RHEA:11165"/>
    </physiologicalReaction>
</comment>
<comment type="catalytic activity">
    <molecule>Isoform 2</molecule>
    <reaction evidence="24">
        <text>a 1,2-diacyl-sn-glycero-3-phosphoethanolamine + S-adenosyl-L-methionine = a 1,2-diacyl-sn-glycero-3-phospho-N-methylethanolamine + S-adenosyl-L-homocysteine + H(+)</text>
        <dbReference type="Rhea" id="RHEA:11164"/>
        <dbReference type="ChEBI" id="CHEBI:15378"/>
        <dbReference type="ChEBI" id="CHEBI:57856"/>
        <dbReference type="ChEBI" id="CHEBI:59789"/>
        <dbReference type="ChEBI" id="CHEBI:64573"/>
        <dbReference type="ChEBI" id="CHEBI:64612"/>
        <dbReference type="EC" id="2.1.1.17"/>
    </reaction>
    <physiologicalReaction direction="left-to-right" evidence="24">
        <dbReference type="Rhea" id="RHEA:11165"/>
    </physiologicalReaction>
</comment>
<comment type="catalytic activity">
    <reaction evidence="1">
        <text>1,2-di-(9Z-octadecenoyl)-sn-glycero-3-phosphoethanolamine + S-adenosyl-L-methionine = 1,2-di-(9Z-octadecenoyl)-sn-glycero-3-phospho-N-methylethanolamine + S-adenosyl-L-homocysteine + H(+)</text>
        <dbReference type="Rhea" id="RHEA:70619"/>
        <dbReference type="ChEBI" id="CHEBI:15378"/>
        <dbReference type="ChEBI" id="CHEBI:57856"/>
        <dbReference type="ChEBI" id="CHEBI:59789"/>
        <dbReference type="ChEBI" id="CHEBI:74986"/>
        <dbReference type="ChEBI" id="CHEBI:85679"/>
    </reaction>
    <physiologicalReaction direction="left-to-right" evidence="1">
        <dbReference type="Rhea" id="RHEA:70620"/>
    </physiologicalReaction>
</comment>
<comment type="catalytic activity">
    <reaction evidence="1">
        <text>1,2-di-(9Z-octadecenoyl)-sn-glycero-3-phospho-N-methylethanolamine + S-adenosyl-L-methionine = 1,2-di-(9Z-octadecenoyl)-sn-glycero-3-phospho-N,N-dimethylethanolamine + S-adenosyl-L-homocysteine + H(+)</text>
        <dbReference type="Rhea" id="RHEA:46112"/>
        <dbReference type="ChEBI" id="CHEBI:15378"/>
        <dbReference type="ChEBI" id="CHEBI:57856"/>
        <dbReference type="ChEBI" id="CHEBI:59789"/>
        <dbReference type="ChEBI" id="CHEBI:85679"/>
        <dbReference type="ChEBI" id="CHEBI:85680"/>
    </reaction>
    <physiologicalReaction direction="left-to-right" evidence="1">
        <dbReference type="Rhea" id="RHEA:46113"/>
    </physiologicalReaction>
</comment>
<comment type="catalytic activity">
    <reaction evidence="1">
        <text>1,2-di-(9Z-octadecenoyl)-sn-glycero-3-phospho-N,N-dimethylethanolamine + S-adenosyl-L-methionine = 1,2-di-(9Z-octadecenoyl)-sn-glycero-3-phosphocholine + S-adenosyl-L-homocysteine + H(+)</text>
        <dbReference type="Rhea" id="RHEA:70623"/>
        <dbReference type="ChEBI" id="CHEBI:15378"/>
        <dbReference type="ChEBI" id="CHEBI:57856"/>
        <dbReference type="ChEBI" id="CHEBI:59789"/>
        <dbReference type="ChEBI" id="CHEBI:74669"/>
        <dbReference type="ChEBI" id="CHEBI:85680"/>
    </reaction>
    <physiologicalReaction direction="left-to-right" evidence="1">
        <dbReference type="Rhea" id="RHEA:70624"/>
    </physiologicalReaction>
</comment>
<comment type="catalytic activity">
    <reaction evidence="1">
        <text>1,2-di-(9Z,12Z-octadecadienoyl)-sn-glycero-3-phosphoethanolamine + S-adenosyl-L-methionine = 1,2-di-(9Z,12Z-octadecadienoyl)-sn-glycero-3-phospho-N-methylethanolamine + S-adenosyl-L-homocysteine + H(+)</text>
        <dbReference type="Rhea" id="RHEA:70739"/>
        <dbReference type="ChEBI" id="CHEBI:15378"/>
        <dbReference type="ChEBI" id="CHEBI:57856"/>
        <dbReference type="ChEBI" id="CHEBI:59789"/>
        <dbReference type="ChEBI" id="CHEBI:172403"/>
        <dbReference type="ChEBI" id="CHEBI:189848"/>
    </reaction>
    <physiologicalReaction direction="left-to-right" evidence="1">
        <dbReference type="Rhea" id="RHEA:70740"/>
    </physiologicalReaction>
</comment>
<comment type="catalytic activity">
    <reaction evidence="1">
        <text>1,2-di-(9Z,12Z-octadecadienoyl)-sn-glycero-3-phospho-N-methylethanolamine + S-adenosyl-L-methionine = 1,2-di-(9Z,12Z-octadecadienoyl)-sn-glycero-3-phospho-N,N-dimethylethanolamine + S-adenosyl-L-homocysteine + H(+)</text>
        <dbReference type="Rhea" id="RHEA:70743"/>
        <dbReference type="ChEBI" id="CHEBI:15378"/>
        <dbReference type="ChEBI" id="CHEBI:57856"/>
        <dbReference type="ChEBI" id="CHEBI:59789"/>
        <dbReference type="ChEBI" id="CHEBI:189848"/>
        <dbReference type="ChEBI" id="CHEBI:189849"/>
    </reaction>
    <physiologicalReaction direction="left-to-right" evidence="1">
        <dbReference type="Rhea" id="RHEA:70744"/>
    </physiologicalReaction>
</comment>
<comment type="catalytic activity">
    <reaction evidence="1">
        <text>1,2-di-(9Z,12Z-octadecadienoyl)-sn-glycero-3-phospho-N,N-dimethylethanolamine + S-adenosyl-L-methionine = 1,2-di-(9Z,12Z-octadecadienoyl)-sn-glycero-3-phosphocholine + S-adenosyl-L-homocysteine + H(+)</text>
        <dbReference type="Rhea" id="RHEA:70747"/>
        <dbReference type="ChEBI" id="CHEBI:15378"/>
        <dbReference type="ChEBI" id="CHEBI:42027"/>
        <dbReference type="ChEBI" id="CHEBI:57856"/>
        <dbReference type="ChEBI" id="CHEBI:59789"/>
        <dbReference type="ChEBI" id="CHEBI:189849"/>
    </reaction>
    <physiologicalReaction direction="left-to-right" evidence="1">
        <dbReference type="Rhea" id="RHEA:70748"/>
    </physiologicalReaction>
</comment>
<comment type="catalytic activity">
    <reaction evidence="1">
        <text>1,2-di-(9Z,12Z,15Z-octadecatrienoyl)-sn-glycero-3-phosphoethanolamine + S-adenosyl-L-methionine = 1,2-di-(9Z,12Z,15Z-octadecatrienoyl)-sn-glycero-3-phospho-N-methylethanolamine + S-adenosyl-L-homocysteine + H(+)</text>
        <dbReference type="Rhea" id="RHEA:70751"/>
        <dbReference type="ChEBI" id="CHEBI:15378"/>
        <dbReference type="ChEBI" id="CHEBI:57856"/>
        <dbReference type="ChEBI" id="CHEBI:59789"/>
        <dbReference type="ChEBI" id="CHEBI:189858"/>
        <dbReference type="ChEBI" id="CHEBI:189859"/>
    </reaction>
    <physiologicalReaction direction="left-to-right" evidence="1">
        <dbReference type="Rhea" id="RHEA:70752"/>
    </physiologicalReaction>
</comment>
<comment type="catalytic activity">
    <reaction evidence="1">
        <text>1,2-di-(9Z,12Z,15Z-octadecatrienoyl)-sn-glycero-3-phospho-N-methylethanolamine + S-adenosyl-L-methionine = 1,2-di-(9Z,12Z,15Z-octadecatrienoyl)-sn-glycero-3-phospho-N,N-dimethylethanolamine + S-adenosyl-L-homocysteine + H(+)</text>
        <dbReference type="Rhea" id="RHEA:70755"/>
        <dbReference type="ChEBI" id="CHEBI:15378"/>
        <dbReference type="ChEBI" id="CHEBI:57856"/>
        <dbReference type="ChEBI" id="CHEBI:59789"/>
        <dbReference type="ChEBI" id="CHEBI:189859"/>
        <dbReference type="ChEBI" id="CHEBI:189860"/>
    </reaction>
    <physiologicalReaction direction="left-to-right" evidence="1">
        <dbReference type="Rhea" id="RHEA:70756"/>
    </physiologicalReaction>
</comment>
<comment type="catalytic activity">
    <reaction evidence="1">
        <text>1,2-di-(9Z,12Z,15Z-octadecatrienoyl)-sn-glycero-3-phospho-N,N-dimethylethanolamine + S-adenosyl-L-methionine = 1,2-di-(9Z,12Z,15Z-octadecatrienoyl)-sn-glycero-3-phosphocholine + S-adenosyl-L-homocysteine + H(+)</text>
        <dbReference type="Rhea" id="RHEA:70759"/>
        <dbReference type="ChEBI" id="CHEBI:15378"/>
        <dbReference type="ChEBI" id="CHEBI:57856"/>
        <dbReference type="ChEBI" id="CHEBI:59789"/>
        <dbReference type="ChEBI" id="CHEBI:86161"/>
        <dbReference type="ChEBI" id="CHEBI:189860"/>
    </reaction>
    <physiologicalReaction direction="left-to-right" evidence="1">
        <dbReference type="Rhea" id="RHEA:70760"/>
    </physiologicalReaction>
</comment>
<comment type="catalytic activity">
    <reaction evidence="1">
        <text>1-hexadecanoyl-2-(4Z,7Z,10Z,13Z,16Z,19Z-docosahexaenoyl)-sn-glycero-3-phosphoethanolamine + S-adenosyl-L-methionine = 1-hexadecanoyl-2-(4Z,7Z,10Z,13Z,16Z,19Z-docosahexaenoyl)-sn-glycero-3-phospho-N-methylethanolamine + S-adenosyl-L-homocysteine + H(+)</text>
        <dbReference type="Rhea" id="RHEA:70763"/>
        <dbReference type="ChEBI" id="CHEBI:15378"/>
        <dbReference type="ChEBI" id="CHEBI:57856"/>
        <dbReference type="ChEBI" id="CHEBI:59789"/>
        <dbReference type="ChEBI" id="CHEBI:78261"/>
        <dbReference type="ChEBI" id="CHEBI:189861"/>
    </reaction>
    <physiologicalReaction direction="left-to-right" evidence="1">
        <dbReference type="Rhea" id="RHEA:70764"/>
    </physiologicalReaction>
</comment>
<comment type="catalytic activity">
    <reaction evidence="1">
        <text>1-hexadecanoyl-2-(4Z,7Z,10Z,13Z,16Z,19Z-docosahexaenoyl)-sn-glycero-3-phospho-N-methylethanolamine + S-adenosyl-L-methionine = 1-hexadecanoyl-2-(4Z,7Z,10Z,13Z,16Z,19Z-docosahexaenoyl)-sn-glycero-3-phospho-N,N-dimethylethanolamine + S-adenosyl-L-homocysteine + H(+)</text>
        <dbReference type="Rhea" id="RHEA:70767"/>
        <dbReference type="ChEBI" id="CHEBI:15378"/>
        <dbReference type="ChEBI" id="CHEBI:57856"/>
        <dbReference type="ChEBI" id="CHEBI:59789"/>
        <dbReference type="ChEBI" id="CHEBI:189861"/>
        <dbReference type="ChEBI" id="CHEBI:189862"/>
    </reaction>
    <physiologicalReaction direction="left-to-right" evidence="1">
        <dbReference type="Rhea" id="RHEA:70768"/>
    </physiologicalReaction>
</comment>
<comment type="catalytic activity">
    <reaction evidence="1">
        <text>1-hexadecanoyl-2-(4Z,7Z,10Z,13Z,16Z,19Z-docosahexaenoyl)-sn-glycero-3-phospho-N,N-dimethylethanolamine + S-adenosyl-L-methionine = 1-hexadecanoyl-2-(4Z,7Z,10Z,13Z,16Z,19Z-docosahexaenoyl)-sn-glycero-3-phosphocholine + S-adenosyl-L-homocysteine + H(+)</text>
        <dbReference type="Rhea" id="RHEA:70771"/>
        <dbReference type="ChEBI" id="CHEBI:15378"/>
        <dbReference type="ChEBI" id="CHEBI:57856"/>
        <dbReference type="ChEBI" id="CHEBI:59789"/>
        <dbReference type="ChEBI" id="CHEBI:74963"/>
        <dbReference type="ChEBI" id="CHEBI:189862"/>
    </reaction>
    <physiologicalReaction direction="left-to-right" evidence="1">
        <dbReference type="Rhea" id="RHEA:70772"/>
    </physiologicalReaction>
</comment>
<comment type="activity regulation">
    <text>The first methylation is rate-limiting.</text>
</comment>
<comment type="pathway">
    <text evidence="21">Phospholipid metabolism; phosphatidylcholine biosynthesis.</text>
</comment>
<comment type="interaction">
    <interactant intactId="EBI-17513590">
        <id>Q9UBM1-2</id>
    </interactant>
    <interactant intactId="EBI-13059134">
        <id>Q13520</id>
        <label>AQP6</label>
    </interactant>
    <organismsDiffer>false</organismsDiffer>
    <experiments>3</experiments>
</comment>
<comment type="interaction">
    <interactant intactId="EBI-17513590">
        <id>Q9UBM1-2</id>
    </interactant>
    <interactant intactId="EBI-1211440">
        <id>P27105</id>
        <label>STOM</label>
    </interactant>
    <organismsDiffer>false</organismsDiffer>
    <experiments>3</experiments>
</comment>
<comment type="subcellular location">
    <subcellularLocation>
        <location evidence="8">Endoplasmic reticulum</location>
    </subcellularLocation>
    <text evidence="4 18">localized in the endoplasmic reticulum (ER) of the liver and in a lipid metabolism-rich region of the ER known as mitochondria-associated membranes (PubMed:15927961). Adopts a topography within the ER membrane that positions both termini in the cytosol (PubMed:12431977).</text>
</comment>
<comment type="subcellular location">
    <molecule>Isoform 1</molecule>
    <subcellularLocation>
        <location evidence="9">Endoplasmic reticulum membrane</location>
        <topology evidence="2">Multi-pass membrane protein</topology>
    </subcellularLocation>
    <subcellularLocation>
        <location evidence="2">Mitochondrion membrane</location>
        <topology evidence="2">Multi-pass membrane protein</topology>
    </subcellularLocation>
    <text evidence="4">Found in endoplasmic reticulum where most PEMT activity is generated and in mitochondria.</text>
</comment>
<comment type="subcellular location">
    <molecule>Isoform 2</molecule>
    <subcellularLocation>
        <location evidence="9">Endoplasmic reticulum membrane</location>
        <topology evidence="2">Multi-pass membrane protein</topology>
    </subcellularLocation>
</comment>
<comment type="alternative products">
    <event type="alternative splicing"/>
    <isoform>
        <id>Q9UBM1-1</id>
        <name>1</name>
        <name>PEMT-S</name>
        <sequence type="displayed"/>
    </isoform>
    <isoform>
        <id>Q9UBM1-2</id>
        <name>2</name>
        <name>PEMT-L</name>
        <sequence type="described" ref="VSP_037311"/>
    </isoform>
    <isoform>
        <id>Q9UBM1-3</id>
        <name>3</name>
        <sequence type="described" ref="VSP_037311 VSP_046034"/>
    </isoform>
</comment>
<comment type="tissue specificity">
    <text evidence="4">Primarily expressed in liver (at protein level).</text>
</comment>
<comment type="PTM">
    <text evidence="9">Isoform 2 is N-glycosylated with high-mannose oligosaccharides.</text>
</comment>
<comment type="similarity">
    <text evidence="2">Belongs to the class VI-like SAM-binding methyltransferase superfamily. PEMT/PEM2 methyltransferase family.</text>
</comment>
<name>PEMT_HUMAN</name>
<evidence type="ECO:0000250" key="1">
    <source>
        <dbReference type="UniProtKB" id="Q08388"/>
    </source>
</evidence>
<evidence type="ECO:0000255" key="2">
    <source>
        <dbReference type="HAMAP-Rule" id="MF_03216"/>
    </source>
</evidence>
<evidence type="ECO:0000269" key="3">
    <source>
    </source>
</evidence>
<evidence type="ECO:0000269" key="4">
    <source>
    </source>
</evidence>
<evidence type="ECO:0000269" key="5">
    <source>
    </source>
</evidence>
<evidence type="ECO:0000269" key="6">
    <source>
    </source>
</evidence>
<evidence type="ECO:0000269" key="7">
    <source>
    </source>
</evidence>
<evidence type="ECO:0000269" key="8">
    <source>
    </source>
</evidence>
<evidence type="ECO:0000269" key="9">
    <source>
    </source>
</evidence>
<evidence type="ECO:0000269" key="10">
    <source>
    </source>
</evidence>
<evidence type="ECO:0000269" key="11">
    <source ref="3"/>
</evidence>
<evidence type="ECO:0000269" key="12">
    <source ref="6"/>
</evidence>
<evidence type="ECO:0000269" key="13">
    <source ref="7"/>
</evidence>
<evidence type="ECO:0000269" key="14">
    <source ref="9"/>
</evidence>
<evidence type="ECO:0000303" key="15">
    <source>
    </source>
</evidence>
<evidence type="ECO:0000303" key="16">
    <source>
    </source>
</evidence>
<evidence type="ECO:0000303" key="17">
    <source>
    </source>
</evidence>
<evidence type="ECO:0000303" key="18">
    <source>
    </source>
</evidence>
<evidence type="ECO:0000303" key="19">
    <source>
    </source>
</evidence>
<evidence type="ECO:0000305" key="20"/>
<evidence type="ECO:0000305" key="21">
    <source>
    </source>
</evidence>
<evidence type="ECO:0000305" key="22">
    <source>
    </source>
</evidence>
<evidence type="ECO:0000305" key="23">
    <source>
    </source>
</evidence>
<evidence type="ECO:0000305" key="24">
    <source>
    </source>
</evidence>
<proteinExistence type="evidence at protein level"/>
<reference key="1">
    <citation type="journal article" date="1999" name="Biochim. Biophys. Acta">
        <title>Identification of three novel cDNAs for human phosphatidylethanolamine N-methyltransferase and localization of the human gene on chromosome 17p11.2.</title>
        <authorList>
            <person name="Walkey C.J."/>
            <person name="Shields D.J."/>
            <person name="Vance D.E."/>
        </authorList>
    </citation>
    <scope>NUCLEOTIDE SEQUENCE [MRNA] (ISOFORM 1)</scope>
    <scope>VARIANT MET-175</scope>
    <source>
        <tissue>Liver</tissue>
    </source>
</reference>
<reference key="2">
    <citation type="journal article" date="2001" name="Biochim. Biophys. Acta">
        <title>Structure, expression profile and alternative processing of the human phosphatidylethanolamine N-methyltransferase (PEMT) gene.</title>
        <authorList>
            <person name="Shields D.J."/>
            <person name="Agellon L.B."/>
            <person name="Vance D.E."/>
        </authorList>
    </citation>
    <scope>NUCLEOTIDE SEQUENCE [GENOMIC DNA]</scope>
    <scope>VARIANT MET-175</scope>
</reference>
<reference key="3">
    <citation type="submission" date="1999-07" db="EMBL/GenBank/DDBJ databases">
        <title>Homo sapiens phosphatidylethanolamine N-methyltransferase mRNA.</title>
        <authorList>
            <person name="Maeda E."/>
            <person name="Watanabe M."/>
            <person name="Wang J."/>
            <person name="Kasuga M."/>
        </authorList>
    </citation>
    <scope>NUCLEOTIDE SEQUENCE [MRNA] (ISOFORM 1)</scope>
    <scope>VARIANTS ILE-58 AND MET-175</scope>
    <source>
        <tissue>Liver</tissue>
    </source>
</reference>
<reference key="4">
    <citation type="journal article" date="2000" name="Proc. Natl. Acad. Sci. U.S.A.">
        <title>Gene expression profiling in the human hypothalamus-pituitary-adrenal axis and full-length cDNA cloning.</title>
        <authorList>
            <person name="Hu R.-M."/>
            <person name="Han Z.-G."/>
            <person name="Song H.-D."/>
            <person name="Peng Y.-D."/>
            <person name="Huang Q.-H."/>
            <person name="Ren S.-X."/>
            <person name="Gu Y.-J."/>
            <person name="Huang C.-H."/>
            <person name="Li Y.-B."/>
            <person name="Jiang C.-L."/>
            <person name="Fu G."/>
            <person name="Zhang Q.-H."/>
            <person name="Gu B.-W."/>
            <person name="Dai M."/>
            <person name="Mao Y.-F."/>
            <person name="Gao G.-F."/>
            <person name="Rong R."/>
            <person name="Ye M."/>
            <person name="Zhou J."/>
            <person name="Xu S.-H."/>
            <person name="Gu J."/>
            <person name="Shi J.-X."/>
            <person name="Jin W.-R."/>
            <person name="Zhang C.-K."/>
            <person name="Wu T.-M."/>
            <person name="Huang G.-Y."/>
            <person name="Chen Z."/>
            <person name="Chen M.-D."/>
            <person name="Chen J.-L."/>
        </authorList>
    </citation>
    <scope>NUCLEOTIDE SEQUENCE [LARGE SCALE MRNA] (ISOFORM 2)</scope>
    <source>
        <tissue>Hypothalamus</tissue>
    </source>
</reference>
<reference key="5">
    <citation type="journal article" date="2004" name="Nat. Genet.">
        <title>Complete sequencing and characterization of 21,243 full-length human cDNAs.</title>
        <authorList>
            <person name="Ota T."/>
            <person name="Suzuki Y."/>
            <person name="Nishikawa T."/>
            <person name="Otsuki T."/>
            <person name="Sugiyama T."/>
            <person name="Irie R."/>
            <person name="Wakamatsu A."/>
            <person name="Hayashi K."/>
            <person name="Sato H."/>
            <person name="Nagai K."/>
            <person name="Kimura K."/>
            <person name="Makita H."/>
            <person name="Sekine M."/>
            <person name="Obayashi M."/>
            <person name="Nishi T."/>
            <person name="Shibahara T."/>
            <person name="Tanaka T."/>
            <person name="Ishii S."/>
            <person name="Yamamoto J."/>
            <person name="Saito K."/>
            <person name="Kawai Y."/>
            <person name="Isono Y."/>
            <person name="Nakamura Y."/>
            <person name="Nagahari K."/>
            <person name="Murakami K."/>
            <person name="Yasuda T."/>
            <person name="Iwayanagi T."/>
            <person name="Wagatsuma M."/>
            <person name="Shiratori A."/>
            <person name="Sudo H."/>
            <person name="Hosoiri T."/>
            <person name="Kaku Y."/>
            <person name="Kodaira H."/>
            <person name="Kondo H."/>
            <person name="Sugawara M."/>
            <person name="Takahashi M."/>
            <person name="Kanda K."/>
            <person name="Yokoi T."/>
            <person name="Furuya T."/>
            <person name="Kikkawa E."/>
            <person name="Omura Y."/>
            <person name="Abe K."/>
            <person name="Kamihara K."/>
            <person name="Katsuta N."/>
            <person name="Sato K."/>
            <person name="Tanikawa M."/>
            <person name="Yamazaki M."/>
            <person name="Ninomiya K."/>
            <person name="Ishibashi T."/>
            <person name="Yamashita H."/>
            <person name="Murakawa K."/>
            <person name="Fujimori K."/>
            <person name="Tanai H."/>
            <person name="Kimata M."/>
            <person name="Watanabe M."/>
            <person name="Hiraoka S."/>
            <person name="Chiba Y."/>
            <person name="Ishida S."/>
            <person name="Ono Y."/>
            <person name="Takiguchi S."/>
            <person name="Watanabe S."/>
            <person name="Yosida M."/>
            <person name="Hotuta T."/>
            <person name="Kusano J."/>
            <person name="Kanehori K."/>
            <person name="Takahashi-Fujii A."/>
            <person name="Hara H."/>
            <person name="Tanase T.-O."/>
            <person name="Nomura Y."/>
            <person name="Togiya S."/>
            <person name="Komai F."/>
            <person name="Hara R."/>
            <person name="Takeuchi K."/>
            <person name="Arita M."/>
            <person name="Imose N."/>
            <person name="Musashino K."/>
            <person name="Yuuki H."/>
            <person name="Oshima A."/>
            <person name="Sasaki N."/>
            <person name="Aotsuka S."/>
            <person name="Yoshikawa Y."/>
            <person name="Matsunawa H."/>
            <person name="Ichihara T."/>
            <person name="Shiohata N."/>
            <person name="Sano S."/>
            <person name="Moriya S."/>
            <person name="Momiyama H."/>
            <person name="Satoh N."/>
            <person name="Takami S."/>
            <person name="Terashima Y."/>
            <person name="Suzuki O."/>
            <person name="Nakagawa S."/>
            <person name="Senoh A."/>
            <person name="Mizoguchi H."/>
            <person name="Goto Y."/>
            <person name="Shimizu F."/>
            <person name="Wakebe H."/>
            <person name="Hishigaki H."/>
            <person name="Watanabe T."/>
            <person name="Sugiyama A."/>
            <person name="Takemoto M."/>
            <person name="Kawakami B."/>
            <person name="Yamazaki M."/>
            <person name="Watanabe K."/>
            <person name="Kumagai A."/>
            <person name="Itakura S."/>
            <person name="Fukuzumi Y."/>
            <person name="Fujimori Y."/>
            <person name="Komiyama M."/>
            <person name="Tashiro H."/>
            <person name="Tanigami A."/>
            <person name="Fujiwara T."/>
            <person name="Ono T."/>
            <person name="Yamada K."/>
            <person name="Fujii Y."/>
            <person name="Ozaki K."/>
            <person name="Hirao M."/>
            <person name="Ohmori Y."/>
            <person name="Kawabata A."/>
            <person name="Hikiji T."/>
            <person name="Kobatake N."/>
            <person name="Inagaki H."/>
            <person name="Ikema Y."/>
            <person name="Okamoto S."/>
            <person name="Okitani R."/>
            <person name="Kawakami T."/>
            <person name="Noguchi S."/>
            <person name="Itoh T."/>
            <person name="Shigeta K."/>
            <person name="Senba T."/>
            <person name="Matsumura K."/>
            <person name="Nakajima Y."/>
            <person name="Mizuno T."/>
            <person name="Morinaga M."/>
            <person name="Sasaki M."/>
            <person name="Togashi T."/>
            <person name="Oyama M."/>
            <person name="Hata H."/>
            <person name="Watanabe M."/>
            <person name="Komatsu T."/>
            <person name="Mizushima-Sugano J."/>
            <person name="Satoh T."/>
            <person name="Shirai Y."/>
            <person name="Takahashi Y."/>
            <person name="Nakagawa K."/>
            <person name="Okumura K."/>
            <person name="Nagase T."/>
            <person name="Nomura N."/>
            <person name="Kikuchi H."/>
            <person name="Masuho Y."/>
            <person name="Yamashita R."/>
            <person name="Nakai K."/>
            <person name="Yada T."/>
            <person name="Nakamura Y."/>
            <person name="Ohara O."/>
            <person name="Isogai T."/>
            <person name="Sugano S."/>
        </authorList>
    </citation>
    <scope>NUCLEOTIDE SEQUENCE [LARGE SCALE MRNA] (ISOFORM 3)</scope>
    <scope>VARIANT ILE-58</scope>
    <source>
        <tissue>Testis</tissue>
    </source>
</reference>
<reference key="6">
    <citation type="submission" date="2004-06" db="EMBL/GenBank/DDBJ databases">
        <title>Cloning of human full open reading frames in Gateway(TM) system entry vector (pDONR201).</title>
        <authorList>
            <person name="Ebert L."/>
            <person name="Schick M."/>
            <person name="Neubert P."/>
            <person name="Schatten R."/>
            <person name="Henze S."/>
            <person name="Korn B."/>
        </authorList>
    </citation>
    <scope>NUCLEOTIDE SEQUENCE [LARGE SCALE MRNA] (ISOFORM 1)</scope>
    <scope>VARIANTS ILE-58 AND MET-175</scope>
</reference>
<reference key="7">
    <citation type="submission" date="2008-03" db="EMBL/GenBank/DDBJ databases">
        <authorList>
            <consortium name="NIEHS SNPs program"/>
        </authorList>
    </citation>
    <scope>NUCLEOTIDE SEQUENCE [GENOMIC DNA]</scope>
    <scope>VARIANTS TRP-3; ILE-58; MET-175 AND ARG-194 (ISOFORM 1)</scope>
    <scope>VARIANT ALA-11 (ISOFORM 2)</scope>
</reference>
<reference key="8">
    <citation type="journal article" date="2006" name="Nature">
        <title>DNA sequence of human chromosome 17 and analysis of rearrangement in the human lineage.</title>
        <authorList>
            <person name="Zody M.C."/>
            <person name="Garber M."/>
            <person name="Adams D.J."/>
            <person name="Sharpe T."/>
            <person name="Harrow J."/>
            <person name="Lupski J.R."/>
            <person name="Nicholson C."/>
            <person name="Searle S.M."/>
            <person name="Wilming L."/>
            <person name="Young S.K."/>
            <person name="Abouelleil A."/>
            <person name="Allen N.R."/>
            <person name="Bi W."/>
            <person name="Bloom T."/>
            <person name="Borowsky M.L."/>
            <person name="Bugalter B.E."/>
            <person name="Butler J."/>
            <person name="Chang J.L."/>
            <person name="Chen C.-K."/>
            <person name="Cook A."/>
            <person name="Corum B."/>
            <person name="Cuomo C.A."/>
            <person name="de Jong P.J."/>
            <person name="DeCaprio D."/>
            <person name="Dewar K."/>
            <person name="FitzGerald M."/>
            <person name="Gilbert J."/>
            <person name="Gibson R."/>
            <person name="Gnerre S."/>
            <person name="Goldstein S."/>
            <person name="Grafham D.V."/>
            <person name="Grocock R."/>
            <person name="Hafez N."/>
            <person name="Hagopian D.S."/>
            <person name="Hart E."/>
            <person name="Norman C.H."/>
            <person name="Humphray S."/>
            <person name="Jaffe D.B."/>
            <person name="Jones M."/>
            <person name="Kamal M."/>
            <person name="Khodiyar V.K."/>
            <person name="LaButti K."/>
            <person name="Laird G."/>
            <person name="Lehoczky J."/>
            <person name="Liu X."/>
            <person name="Lokyitsang T."/>
            <person name="Loveland J."/>
            <person name="Lui A."/>
            <person name="Macdonald P."/>
            <person name="Major J.E."/>
            <person name="Matthews L."/>
            <person name="Mauceli E."/>
            <person name="McCarroll S.A."/>
            <person name="Mihalev A.H."/>
            <person name="Mudge J."/>
            <person name="Nguyen C."/>
            <person name="Nicol R."/>
            <person name="O'Leary S.B."/>
            <person name="Osoegawa K."/>
            <person name="Schwartz D.C."/>
            <person name="Shaw-Smith C."/>
            <person name="Stankiewicz P."/>
            <person name="Steward C."/>
            <person name="Swarbreck D."/>
            <person name="Venkataraman V."/>
            <person name="Whittaker C.A."/>
            <person name="Yang X."/>
            <person name="Zimmer A.R."/>
            <person name="Bradley A."/>
            <person name="Hubbard T."/>
            <person name="Birren B.W."/>
            <person name="Rogers J."/>
            <person name="Lander E.S."/>
            <person name="Nusbaum C."/>
        </authorList>
    </citation>
    <scope>NUCLEOTIDE SEQUENCE [LARGE SCALE GENOMIC DNA]</scope>
</reference>
<reference key="9">
    <citation type="submission" date="2005-09" db="EMBL/GenBank/DDBJ databases">
        <authorList>
            <person name="Mural R.J."/>
            <person name="Istrail S."/>
            <person name="Sutton G.G."/>
            <person name="Florea L."/>
            <person name="Halpern A.L."/>
            <person name="Mobarry C.M."/>
            <person name="Lippert R."/>
            <person name="Walenz B."/>
            <person name="Shatkay H."/>
            <person name="Dew I."/>
            <person name="Miller J.R."/>
            <person name="Flanigan M.J."/>
            <person name="Edwards N.J."/>
            <person name="Bolanos R."/>
            <person name="Fasulo D."/>
            <person name="Halldorsson B.V."/>
            <person name="Hannenhalli S."/>
            <person name="Turner R."/>
            <person name="Yooseph S."/>
            <person name="Lu F."/>
            <person name="Nusskern D.R."/>
            <person name="Shue B.C."/>
            <person name="Zheng X.H."/>
            <person name="Zhong F."/>
            <person name="Delcher A.L."/>
            <person name="Huson D.H."/>
            <person name="Kravitz S.A."/>
            <person name="Mouchard L."/>
            <person name="Reinert K."/>
            <person name="Remington K.A."/>
            <person name="Clark A.G."/>
            <person name="Waterman M.S."/>
            <person name="Eichler E.E."/>
            <person name="Adams M.D."/>
            <person name="Hunkapiller M.W."/>
            <person name="Myers E.W."/>
            <person name="Venter J.C."/>
        </authorList>
    </citation>
    <scope>NUCLEOTIDE SEQUENCE [LARGE SCALE GENOMIC DNA]</scope>
    <scope>VARIANT MET-175</scope>
</reference>
<reference key="10">
    <citation type="journal article" date="2004" name="Genome Res.">
        <title>The status, quality, and expansion of the NIH full-length cDNA project: the Mammalian Gene Collection (MGC).</title>
        <authorList>
            <consortium name="The MGC Project Team"/>
        </authorList>
    </citation>
    <scope>NUCLEOTIDE SEQUENCE [LARGE SCALE MRNA] (ISOFORM 2)</scope>
    <scope>VARIANTS ILE-58 AND MET-175</scope>
    <source>
        <tissue>Brain</tissue>
        <tissue>Skin</tissue>
    </source>
</reference>
<reference key="11">
    <citation type="journal article" date="2003" name="J. Biol. Chem.">
        <title>Membrane topography of human phosphatidylethanolamine N-methyltransferase.</title>
        <authorList>
            <person name="Shields D.J."/>
            <person name="Lehner R."/>
            <person name="Agellon L.B."/>
            <person name="Vance D.E."/>
        </authorList>
    </citation>
    <scope>SUBCELLULAR LOCATION</scope>
    <scope>CATALYTIC ACTIVITY</scope>
    <scope>FUNCTION</scope>
    <scope>PATHWAY</scope>
    <scope>TISSUE SPECIFICITY</scope>
</reference>
<reference key="12">
    <citation type="journal article" date="2003" name="J. Biol. Chem.">
        <title>Molecular dissection of the S-adenosylmethionine-binding site of phosphatidylethanolamine N-methyltransferase.</title>
        <authorList>
            <person name="Shields D.J."/>
            <person name="Altarejos J.Y."/>
            <person name="Wang X."/>
            <person name="Agellon L.B."/>
            <person name="Vance D.E."/>
        </authorList>
    </citation>
    <scope>MUTAGENESIS OF GLY-98; GLY-100; GLU-180 AND GLU-181</scope>
</reference>
<reference key="13">
    <citation type="journal article" date="2005" name="J. Biol. Chem.">
        <title>Localization-independent regulation of homocysteine secretion by phosphatidylethanolamine N-methyltransferase.</title>
        <authorList>
            <person name="Shields D.J."/>
            <person name="Lingrell S."/>
            <person name="Agellon L.B."/>
            <person name="Brosnan J.T."/>
            <person name="Vance D.E."/>
        </authorList>
    </citation>
    <scope>FUNCTION</scope>
    <scope>CATALYTIC ACTIVITY</scope>
    <scope>TISSUE SPECIFICITY</scope>
    <scope>SUBCELLULAR LOCATION</scope>
</reference>
<reference key="14">
    <citation type="journal article" date="2007" name="FASEB J.">
        <title>Phosphatidylethanolamine N-methyltransferase (PEMT) gene expression is induced by estrogen in human and mouse primary hepatocytes.</title>
        <authorList>
            <person name="Resseguie M."/>
            <person name="Song J."/>
            <person name="Niculescu M.D."/>
            <person name="da Costa K.A."/>
            <person name="Randall T.A."/>
            <person name="Zeisel S.H."/>
        </authorList>
    </citation>
    <scope>ALTERNATIVE SPLICING</scope>
</reference>
<reference key="15">
    <citation type="journal article" date="2010" name="Biochem. J.">
        <title>Functional analysis of two isoforms of phosphatidylethanolamine N-methyltransferase.</title>
        <authorList>
            <person name="Morita S.Y."/>
            <person name="Takeuchi A."/>
            <person name="Kitagawa S."/>
        </authorList>
    </citation>
    <scope>ALTERNATIVE SPLICING</scope>
    <scope>TOPOLOGY</scope>
    <scope>GLYCOSYLATION (ISOFORM 2)</scope>
    <scope>SUBCELLULAR LOCATION (ISOFORMS 1 AND 2)</scope>
    <scope>FUNCTION (ISOFORMS 1 AND 2)</scope>
    <scope>CATALYTIC ACTIVITY (ISOFORMS 1 AND 2)</scope>
</reference>
<gene>
    <name evidence="2" type="primary">PEMT</name>
    <name type="synonym">PEMPT</name>
    <name type="synonym">PNMT</name>
</gene>